<comment type="catalytic activity">
    <reaction evidence="1">
        <text>D-arabinose 5-phosphate + phosphoenolpyruvate + H2O = 3-deoxy-alpha-D-manno-2-octulosonate-8-phosphate + phosphate</text>
        <dbReference type="Rhea" id="RHEA:14053"/>
        <dbReference type="ChEBI" id="CHEBI:15377"/>
        <dbReference type="ChEBI" id="CHEBI:43474"/>
        <dbReference type="ChEBI" id="CHEBI:57693"/>
        <dbReference type="ChEBI" id="CHEBI:58702"/>
        <dbReference type="ChEBI" id="CHEBI:85985"/>
        <dbReference type="EC" id="2.5.1.55"/>
    </reaction>
</comment>
<comment type="pathway">
    <text evidence="1">Carbohydrate biosynthesis; 3-deoxy-D-manno-octulosonate biosynthesis; 3-deoxy-D-manno-octulosonate from D-ribulose 5-phosphate: step 2/3.</text>
</comment>
<comment type="pathway">
    <text evidence="1">Bacterial outer membrane biogenesis; lipopolysaccharide biosynthesis.</text>
</comment>
<comment type="subcellular location">
    <subcellularLocation>
        <location evidence="1">Cytoplasm</location>
    </subcellularLocation>
</comment>
<comment type="similarity">
    <text evidence="1">Belongs to the KdsA family.</text>
</comment>
<sequence length="284" mass="30795">MKQKVVNIGDIKVANDLPFVLFGGMNVLESRDLAMRICEHYVTVTQKLGIPYVFKASFDKANRSSIHSYRGPGLEEGMKIFQELKQTFGVKVITDVHEASQAQPVADVVDVIQLPAFLARQTDLVEAMAKTGAVINVKKPQFVSPGQMGNIVDKFHEGGNDKVILCDRGANFGYDNLVVDMLGFSVMKKVSGNSPVIFDVTHALQCRDPFGAASGGRRGQVTELARAGMAVGLAGLFLESHPDPANAKCDGPSALPLAKLEQFLTQIKAIDDLVKSFDELDTEN</sequence>
<organism>
    <name type="scientific">Salmonella paratyphi B (strain ATCC BAA-1250 / SPB7)</name>
    <dbReference type="NCBI Taxonomy" id="1016998"/>
    <lineage>
        <taxon>Bacteria</taxon>
        <taxon>Pseudomonadati</taxon>
        <taxon>Pseudomonadota</taxon>
        <taxon>Gammaproteobacteria</taxon>
        <taxon>Enterobacterales</taxon>
        <taxon>Enterobacteriaceae</taxon>
        <taxon>Salmonella</taxon>
    </lineage>
</organism>
<dbReference type="EC" id="2.5.1.55" evidence="1"/>
<dbReference type="EMBL" id="CP000886">
    <property type="protein sequence ID" value="ABX66864.1"/>
    <property type="molecule type" value="Genomic_DNA"/>
</dbReference>
<dbReference type="RefSeq" id="WP_000811046.1">
    <property type="nucleotide sequence ID" value="NC_010102.1"/>
</dbReference>
<dbReference type="SMR" id="A9MW08"/>
<dbReference type="KEGG" id="spq:SPAB_01457"/>
<dbReference type="PATRIC" id="fig|1016998.12.peg.1376"/>
<dbReference type="HOGENOM" id="CLU_036666_0_0_6"/>
<dbReference type="BioCyc" id="SENT1016998:SPAB_RS05960-MONOMER"/>
<dbReference type="UniPathway" id="UPA00030"/>
<dbReference type="UniPathway" id="UPA00357">
    <property type="reaction ID" value="UER00474"/>
</dbReference>
<dbReference type="Proteomes" id="UP000008556">
    <property type="component" value="Chromosome"/>
</dbReference>
<dbReference type="GO" id="GO:0005737">
    <property type="term" value="C:cytoplasm"/>
    <property type="evidence" value="ECO:0007669"/>
    <property type="project" value="UniProtKB-SubCell"/>
</dbReference>
<dbReference type="GO" id="GO:0008676">
    <property type="term" value="F:3-deoxy-8-phosphooctulonate synthase activity"/>
    <property type="evidence" value="ECO:0007669"/>
    <property type="project" value="UniProtKB-UniRule"/>
</dbReference>
<dbReference type="GO" id="GO:0019294">
    <property type="term" value="P:keto-3-deoxy-D-manno-octulosonic acid biosynthetic process"/>
    <property type="evidence" value="ECO:0007669"/>
    <property type="project" value="UniProtKB-UniRule"/>
</dbReference>
<dbReference type="FunFam" id="3.20.20.70:FF:000058">
    <property type="entry name" value="2-dehydro-3-deoxyphosphooctonate aldolase"/>
    <property type="match status" value="1"/>
</dbReference>
<dbReference type="Gene3D" id="3.20.20.70">
    <property type="entry name" value="Aldolase class I"/>
    <property type="match status" value="1"/>
</dbReference>
<dbReference type="HAMAP" id="MF_00056">
    <property type="entry name" value="KDO8P_synth"/>
    <property type="match status" value="1"/>
</dbReference>
<dbReference type="InterPro" id="IPR013785">
    <property type="entry name" value="Aldolase_TIM"/>
</dbReference>
<dbReference type="InterPro" id="IPR006218">
    <property type="entry name" value="DAHP1/KDSA"/>
</dbReference>
<dbReference type="InterPro" id="IPR006269">
    <property type="entry name" value="KDO8P_synthase"/>
</dbReference>
<dbReference type="NCBIfam" id="TIGR01362">
    <property type="entry name" value="KDO8P_synth"/>
    <property type="match status" value="1"/>
</dbReference>
<dbReference type="NCBIfam" id="NF003543">
    <property type="entry name" value="PRK05198.1"/>
    <property type="match status" value="1"/>
</dbReference>
<dbReference type="NCBIfam" id="NF009109">
    <property type="entry name" value="PRK12457.1"/>
    <property type="match status" value="1"/>
</dbReference>
<dbReference type="PANTHER" id="PTHR21057">
    <property type="entry name" value="PHOSPHO-2-DEHYDRO-3-DEOXYHEPTONATE ALDOLASE"/>
    <property type="match status" value="1"/>
</dbReference>
<dbReference type="Pfam" id="PF00793">
    <property type="entry name" value="DAHP_synth_1"/>
    <property type="match status" value="1"/>
</dbReference>
<dbReference type="SUPFAM" id="SSF51569">
    <property type="entry name" value="Aldolase"/>
    <property type="match status" value="1"/>
</dbReference>
<gene>
    <name evidence="1" type="primary">kdsA</name>
    <name type="ordered locus">SPAB_01457</name>
</gene>
<name>KDSA_SALPB</name>
<feature type="chain" id="PRO_1000074988" description="2-dehydro-3-deoxyphosphooctonate aldolase">
    <location>
        <begin position="1"/>
        <end position="284"/>
    </location>
</feature>
<evidence type="ECO:0000255" key="1">
    <source>
        <dbReference type="HAMAP-Rule" id="MF_00056"/>
    </source>
</evidence>
<proteinExistence type="inferred from homology"/>
<accession>A9MW08</accession>
<reference key="1">
    <citation type="submission" date="2007-11" db="EMBL/GenBank/DDBJ databases">
        <authorList>
            <consortium name="The Salmonella enterica serovar Paratyphi B Genome Sequencing Project"/>
            <person name="McClelland M."/>
            <person name="Sanderson E.K."/>
            <person name="Porwollik S."/>
            <person name="Spieth J."/>
            <person name="Clifton W.S."/>
            <person name="Fulton R."/>
            <person name="Cordes M."/>
            <person name="Wollam A."/>
            <person name="Shah N."/>
            <person name="Pepin K."/>
            <person name="Bhonagiri V."/>
            <person name="Nash W."/>
            <person name="Johnson M."/>
            <person name="Thiruvilangam P."/>
            <person name="Wilson R."/>
        </authorList>
    </citation>
    <scope>NUCLEOTIDE SEQUENCE [LARGE SCALE GENOMIC DNA]</scope>
    <source>
        <strain>ATCC BAA-1250 / SPB7</strain>
    </source>
</reference>
<keyword id="KW-0963">Cytoplasm</keyword>
<keyword id="KW-0448">Lipopolysaccharide biosynthesis</keyword>
<keyword id="KW-0808">Transferase</keyword>
<protein>
    <recommendedName>
        <fullName evidence="1">2-dehydro-3-deoxyphosphooctonate aldolase</fullName>
        <ecNumber evidence="1">2.5.1.55</ecNumber>
    </recommendedName>
    <alternativeName>
        <fullName evidence="1">3-deoxy-D-manno-octulosonic acid 8-phosphate synthase</fullName>
    </alternativeName>
    <alternativeName>
        <fullName evidence="1">KDO-8-phosphate synthase</fullName>
        <shortName evidence="1">KDO 8-P synthase</shortName>
        <shortName evidence="1">KDOPS</shortName>
    </alternativeName>
    <alternativeName>
        <fullName evidence="1">Phospho-2-dehydro-3-deoxyoctonate aldolase</fullName>
    </alternativeName>
</protein>